<organismHost>
    <name type="scientific">Mus musculus</name>
    <name type="common">Mouse</name>
    <dbReference type="NCBI Taxonomy" id="10090"/>
</organismHost>
<evidence type="ECO:0000250" key="1">
    <source>
        <dbReference type="UniProtKB" id="P68460"/>
    </source>
</evidence>
<evidence type="ECO:0000305" key="2"/>
<name>GLRX2_ECTVM</name>
<protein>
    <recommendedName>
        <fullName>Glutaredoxin-2</fullName>
    </recommendedName>
</protein>
<reference key="1">
    <citation type="journal article" date="2003" name="Virology">
        <title>The genomic sequence of Ectromelia virus, the causative agent of mousepox.</title>
        <authorList>
            <person name="Chen N."/>
            <person name="Danila M.I."/>
            <person name="Feng Z."/>
            <person name="Buller R.M."/>
            <person name="Wang C."/>
            <person name="Han X."/>
            <person name="Lefkowitz E.J."/>
            <person name="Upton C."/>
        </authorList>
    </citation>
    <scope>NUCLEOTIDE SEQUENCE [LARGE SCALE GENOMIC DNA]</scope>
</reference>
<feature type="chain" id="PRO_0000141635" description="Glutaredoxin-2">
    <location>
        <begin position="1"/>
        <end position="124"/>
    </location>
</feature>
<feature type="disulfide bond" description="Redox-active" evidence="1">
    <location>
        <begin position="13"/>
        <end position="16"/>
    </location>
</feature>
<dbReference type="EMBL" id="AF012825">
    <property type="protein sequence ID" value="AAM92369.1"/>
    <property type="molecule type" value="Genomic_DNA"/>
</dbReference>
<dbReference type="RefSeq" id="NP_671583.1">
    <property type="nucleotide sequence ID" value="NC_004105.1"/>
</dbReference>
<dbReference type="SMR" id="Q8V507"/>
<dbReference type="GeneID" id="951589"/>
<dbReference type="KEGG" id="vg:951589"/>
<dbReference type="Proteomes" id="UP000172110">
    <property type="component" value="Segment"/>
</dbReference>
<dbReference type="GO" id="GO:0030430">
    <property type="term" value="C:host cell cytoplasm"/>
    <property type="evidence" value="ECO:0007669"/>
    <property type="project" value="UniProtKB-SubCell"/>
</dbReference>
<dbReference type="Gene3D" id="3.40.30.10">
    <property type="entry name" value="Glutaredoxin"/>
    <property type="match status" value="1"/>
</dbReference>
<dbReference type="InterPro" id="IPR008554">
    <property type="entry name" value="Glutaredoxin-like"/>
</dbReference>
<dbReference type="InterPro" id="IPR036249">
    <property type="entry name" value="Thioredoxin-like_sf"/>
</dbReference>
<dbReference type="Pfam" id="PF05768">
    <property type="entry name" value="Glrx-like"/>
    <property type="match status" value="1"/>
</dbReference>
<dbReference type="SUPFAM" id="SSF52833">
    <property type="entry name" value="Thioredoxin-like"/>
    <property type="match status" value="1"/>
</dbReference>
<organism>
    <name type="scientific">Ectromelia virus (strain Moscow)</name>
    <name type="common">ECTV</name>
    <name type="synonym">Mousepox virus</name>
    <dbReference type="NCBI Taxonomy" id="265874"/>
    <lineage>
        <taxon>Viruses</taxon>
        <taxon>Varidnaviria</taxon>
        <taxon>Bamfordvirae</taxon>
        <taxon>Nucleocytoviricota</taxon>
        <taxon>Pokkesviricetes</taxon>
        <taxon>Chitovirales</taxon>
        <taxon>Poxviridae</taxon>
        <taxon>Chordopoxvirinae</taxon>
        <taxon>Orthopoxvirus</taxon>
        <taxon>Ectromelia virus</taxon>
    </lineage>
</organism>
<gene>
    <name type="primary">OPG088</name>
    <name type="ordered locus">EVM065</name>
</gene>
<comment type="function">
    <text evidence="1">Glutaredoxin necessary for virion morphogenesis and virus replication. Functions as a thiol-disulfide transfer protein between membrane-associated OPG128 and substrates OPG095 or OPG053. The complete pathway for formation of disulfide bonds in intracellular virion membrane proteins sequentially involves oxidation of OPG072, OPG128 and OPG088. Exhibit thioltransferase and dehydroascorbate reductase activities in vitro.</text>
</comment>
<comment type="subunit">
    <text evidence="1">Homodimer.</text>
</comment>
<comment type="subcellular location">
    <subcellularLocation>
        <location evidence="1">Host cytoplasm</location>
    </subcellularLocation>
</comment>
<comment type="induction">
    <text evidence="1">Expressed in the intermediate phase of the viral replicative cycle.</text>
</comment>
<comment type="similarity">
    <text evidence="2">Belongs to the glutaredoxin family.</text>
</comment>
<proteinExistence type="inferred from homology"/>
<keyword id="KW-1015">Disulfide bond</keyword>
<keyword id="KW-0249">Electron transport</keyword>
<keyword id="KW-1035">Host cytoplasm</keyword>
<keyword id="KW-0676">Redox-active center</keyword>
<keyword id="KW-0813">Transport</keyword>
<accession>Q8V507</accession>
<sequence>MKNVLIIFGKPYCSICENVSEAVEELKSEYDILHVDILSFFLKDGDSSMLGDVKRGTLIGNFAAHLSNYIVSIFKYNPQTKQMAFVDINKSLDFTKTDKSLVNLEILKSEIEKATYGVWPPVTE</sequence>